<name>FLIQ_BORBU</name>
<sequence length="87" mass="9826">MTAGHILYLIRISIENIIILSAPMLIIALIVGLLISIFQAITSIQDQTLSFIPKIIVILLVIVIFGPWILNKLMQFTYMIFSQLQNV</sequence>
<protein>
    <recommendedName>
        <fullName>Flagellar biosynthetic protein FliQ</fullName>
    </recommendedName>
</protein>
<evidence type="ECO:0000250" key="1"/>
<evidence type="ECO:0000255" key="2"/>
<evidence type="ECO:0000305" key="3"/>
<reference key="1">
    <citation type="submission" date="1995-12" db="EMBL/GenBank/DDBJ databases">
        <authorList>
            <person name="Dunn J.J."/>
            <person name="Butler-Loffredo L."/>
            <person name="Kieleczawa J."/>
            <person name="Medalle J."/>
            <person name="Luft B.J."/>
        </authorList>
    </citation>
    <scope>NUCLEOTIDE SEQUENCE [GENOMIC DNA]</scope>
    <source>
        <strain>ATCC 35210 / DSM 4680 / CIP 102532 / B31</strain>
    </source>
</reference>
<reference key="2">
    <citation type="submission" date="1996-02" db="EMBL/GenBank/DDBJ databases">
        <authorList>
            <person name="Ge Y."/>
            <person name="Charon N.W."/>
        </authorList>
    </citation>
    <scope>NUCLEOTIDE SEQUENCE [GENOMIC DNA]</scope>
    <source>
        <strain>212</strain>
    </source>
</reference>
<reference key="3">
    <citation type="journal article" date="1997" name="Nature">
        <title>Genomic sequence of a Lyme disease spirochaete, Borrelia burgdorferi.</title>
        <authorList>
            <person name="Fraser C.M."/>
            <person name="Casjens S."/>
            <person name="Huang W.M."/>
            <person name="Sutton G.G."/>
            <person name="Clayton R.A."/>
            <person name="Lathigra R."/>
            <person name="White O."/>
            <person name="Ketchum K.A."/>
            <person name="Dodson R.J."/>
            <person name="Hickey E.K."/>
            <person name="Gwinn M.L."/>
            <person name="Dougherty B.A."/>
            <person name="Tomb J.-F."/>
            <person name="Fleischmann R.D."/>
            <person name="Richardson D.L."/>
            <person name="Peterson J.D."/>
            <person name="Kerlavage A.R."/>
            <person name="Quackenbush J."/>
            <person name="Salzberg S.L."/>
            <person name="Hanson M."/>
            <person name="van Vugt R."/>
            <person name="Palmer N."/>
            <person name="Adams M.D."/>
            <person name="Gocayne J.D."/>
            <person name="Weidman J.F."/>
            <person name="Utterback T.R."/>
            <person name="Watthey L."/>
            <person name="McDonald L.A."/>
            <person name="Artiach P."/>
            <person name="Bowman C."/>
            <person name="Garland S.A."/>
            <person name="Fujii C."/>
            <person name="Cotton M.D."/>
            <person name="Horst K."/>
            <person name="Roberts K.M."/>
            <person name="Hatch B."/>
            <person name="Smith H.O."/>
            <person name="Venter J.C."/>
        </authorList>
    </citation>
    <scope>NUCLEOTIDE SEQUENCE [LARGE SCALE GENOMIC DNA]</scope>
    <source>
        <strain>ATCC 35210 / DSM 4680 / CIP 102532 / B31</strain>
    </source>
</reference>
<comment type="function">
    <text>Role in flagellar biosynthesis.</text>
</comment>
<comment type="subcellular location">
    <subcellularLocation>
        <location evidence="3">Cell membrane</location>
        <topology evidence="3">Multi-pass membrane protein</topology>
    </subcellularLocation>
    <subcellularLocation>
        <location evidence="1">Bacterial flagellum basal body</location>
    </subcellularLocation>
</comment>
<comment type="similarity">
    <text evidence="3">Belongs to the FliQ/MopD/SpaQ family.</text>
</comment>
<proteinExistence type="inferred from homology"/>
<keyword id="KW-0975">Bacterial flagellum</keyword>
<keyword id="KW-1003">Cell membrane</keyword>
<keyword id="KW-0472">Membrane</keyword>
<keyword id="KW-1185">Reference proteome</keyword>
<keyword id="KW-0812">Transmembrane</keyword>
<keyword id="KW-1133">Transmembrane helix</keyword>
<feature type="chain" id="PRO_0000129088" description="Flagellar biosynthetic protein FliQ">
    <location>
        <begin position="1"/>
        <end position="87"/>
    </location>
</feature>
<feature type="transmembrane region" description="Helical" evidence="2">
    <location>
        <begin position="17"/>
        <end position="37"/>
    </location>
</feature>
<feature type="transmembrane region" description="Helical" evidence="2">
    <location>
        <begin position="50"/>
        <end position="70"/>
    </location>
</feature>
<organism>
    <name type="scientific">Borreliella burgdorferi (strain ATCC 35210 / DSM 4680 / CIP 102532 / B31)</name>
    <name type="common">Borrelia burgdorferi</name>
    <dbReference type="NCBI Taxonomy" id="224326"/>
    <lineage>
        <taxon>Bacteria</taxon>
        <taxon>Pseudomonadati</taxon>
        <taxon>Spirochaetota</taxon>
        <taxon>Spirochaetia</taxon>
        <taxon>Spirochaetales</taxon>
        <taxon>Borreliaceae</taxon>
        <taxon>Borreliella</taxon>
    </lineage>
</organism>
<dbReference type="EMBL" id="U43739">
    <property type="protein sequence ID" value="AAA85598.1"/>
    <property type="molecule type" value="Genomic_DNA"/>
</dbReference>
<dbReference type="EMBL" id="L75945">
    <property type="protein sequence ID" value="AAB58969.1"/>
    <property type="molecule type" value="Genomic_DNA"/>
</dbReference>
<dbReference type="EMBL" id="AE000783">
    <property type="protein sequence ID" value="AAC66674.1"/>
    <property type="molecule type" value="Genomic_DNA"/>
</dbReference>
<dbReference type="PIR" id="B70134">
    <property type="entry name" value="B70134"/>
</dbReference>
<dbReference type="RefSeq" id="NP_212408.1">
    <property type="nucleotide sequence ID" value="NC_001318.1"/>
</dbReference>
<dbReference type="RefSeq" id="WP_002655982.1">
    <property type="nucleotide sequence ID" value="NC_001318.1"/>
</dbReference>
<dbReference type="SMR" id="Q44906"/>
<dbReference type="STRING" id="224326.BB_0274"/>
<dbReference type="PaxDb" id="224326-BB_0274"/>
<dbReference type="EnsemblBacteria" id="AAC66674">
    <property type="protein sequence ID" value="AAC66674"/>
    <property type="gene ID" value="BB_0274"/>
</dbReference>
<dbReference type="GeneID" id="56567705"/>
<dbReference type="KEGG" id="bbu:BB_0274"/>
<dbReference type="PATRIC" id="fig|224326.49.peg.673"/>
<dbReference type="HOGENOM" id="CLU_164516_0_1_12"/>
<dbReference type="OrthoDB" id="9806440at2"/>
<dbReference type="Proteomes" id="UP000001807">
    <property type="component" value="Chromosome"/>
</dbReference>
<dbReference type="GO" id="GO:0009425">
    <property type="term" value="C:bacterial-type flagellum basal body"/>
    <property type="evidence" value="ECO:0007669"/>
    <property type="project" value="UniProtKB-SubCell"/>
</dbReference>
<dbReference type="GO" id="GO:0005886">
    <property type="term" value="C:plasma membrane"/>
    <property type="evidence" value="ECO:0007669"/>
    <property type="project" value="UniProtKB-SubCell"/>
</dbReference>
<dbReference type="GO" id="GO:0044780">
    <property type="term" value="P:bacterial-type flagellum assembly"/>
    <property type="evidence" value="ECO:0007669"/>
    <property type="project" value="InterPro"/>
</dbReference>
<dbReference type="GO" id="GO:0009306">
    <property type="term" value="P:protein secretion"/>
    <property type="evidence" value="ECO:0007669"/>
    <property type="project" value="InterPro"/>
</dbReference>
<dbReference type="InterPro" id="IPR002191">
    <property type="entry name" value="Bac_export_3"/>
</dbReference>
<dbReference type="InterPro" id="IPR006305">
    <property type="entry name" value="FliQ"/>
</dbReference>
<dbReference type="NCBIfam" id="TIGR01402">
    <property type="entry name" value="fliQ"/>
    <property type="match status" value="1"/>
</dbReference>
<dbReference type="PANTHER" id="PTHR34040">
    <property type="entry name" value="FLAGELLAR BIOSYNTHETIC PROTEIN FLIQ"/>
    <property type="match status" value="1"/>
</dbReference>
<dbReference type="PANTHER" id="PTHR34040:SF2">
    <property type="entry name" value="FLAGELLAR BIOSYNTHETIC PROTEIN FLIQ"/>
    <property type="match status" value="1"/>
</dbReference>
<dbReference type="Pfam" id="PF01313">
    <property type="entry name" value="Bac_export_3"/>
    <property type="match status" value="1"/>
</dbReference>
<dbReference type="PIRSF" id="PIRSF004669">
    <property type="entry name" value="FliQ"/>
    <property type="match status" value="1"/>
</dbReference>
<dbReference type="PRINTS" id="PR00952">
    <property type="entry name" value="TYPE3IMQPROT"/>
</dbReference>
<accession>Q44906</accession>
<accession>Q44762</accession>
<gene>
    <name type="primary">fliQ</name>
    <name type="ordered locus">BB_0274</name>
</gene>